<reference key="1">
    <citation type="journal article" date="1999" name="Science">
        <title>Genome sequence of the radioresistant bacterium Deinococcus radiodurans R1.</title>
        <authorList>
            <person name="White O."/>
            <person name="Eisen J.A."/>
            <person name="Heidelberg J.F."/>
            <person name="Hickey E.K."/>
            <person name="Peterson J.D."/>
            <person name="Dodson R.J."/>
            <person name="Haft D.H."/>
            <person name="Gwinn M.L."/>
            <person name="Nelson W.C."/>
            <person name="Richardson D.L."/>
            <person name="Moffat K.S."/>
            <person name="Qin H."/>
            <person name="Jiang L."/>
            <person name="Pamphile W."/>
            <person name="Crosby M."/>
            <person name="Shen M."/>
            <person name="Vamathevan J.J."/>
            <person name="Lam P."/>
            <person name="McDonald L.A."/>
            <person name="Utterback T.R."/>
            <person name="Zalewski C."/>
            <person name="Makarova K.S."/>
            <person name="Aravind L."/>
            <person name="Daly M.J."/>
            <person name="Minton K.W."/>
            <person name="Fleischmann R.D."/>
            <person name="Ketchum K.A."/>
            <person name="Nelson K.E."/>
            <person name="Salzberg S.L."/>
            <person name="Smith H.O."/>
            <person name="Venter J.C."/>
            <person name="Fraser C.M."/>
        </authorList>
    </citation>
    <scope>NUCLEOTIDE SEQUENCE [LARGE SCALE GENOMIC DNA]</scope>
    <source>
        <strain>ATCC 13939 / DSM 20539 / JCM 16871 / CCUG 27074 / LMG 4051 / NBRC 15346 / NCIMB 9279 / VKM B-1422 / R1</strain>
    </source>
</reference>
<name>SUCC_DEIRA</name>
<dbReference type="EC" id="6.2.1.5" evidence="1"/>
<dbReference type="EMBL" id="AE000513">
    <property type="protein sequence ID" value="AAF10816.1"/>
    <property type="molecule type" value="Genomic_DNA"/>
</dbReference>
<dbReference type="PIR" id="E75419">
    <property type="entry name" value="E75419"/>
</dbReference>
<dbReference type="RefSeq" id="NP_294971.1">
    <property type="nucleotide sequence ID" value="NC_001263.1"/>
</dbReference>
<dbReference type="RefSeq" id="WP_010887890.1">
    <property type="nucleotide sequence ID" value="NC_001263.1"/>
</dbReference>
<dbReference type="SMR" id="Q9RUY3"/>
<dbReference type="FunCoup" id="Q9RUY3">
    <property type="interactions" value="431"/>
</dbReference>
<dbReference type="STRING" id="243230.DR_1247"/>
<dbReference type="PaxDb" id="243230-DR_1247"/>
<dbReference type="EnsemblBacteria" id="AAF10816">
    <property type="protein sequence ID" value="AAF10816"/>
    <property type="gene ID" value="DR_1247"/>
</dbReference>
<dbReference type="GeneID" id="69517493"/>
<dbReference type="KEGG" id="dra:DR_1247"/>
<dbReference type="PATRIC" id="fig|243230.17.peg.1442"/>
<dbReference type="eggNOG" id="COG0045">
    <property type="taxonomic scope" value="Bacteria"/>
</dbReference>
<dbReference type="HOGENOM" id="CLU_037430_0_2_0"/>
<dbReference type="InParanoid" id="Q9RUY3"/>
<dbReference type="OrthoDB" id="9802602at2"/>
<dbReference type="UniPathway" id="UPA00223">
    <property type="reaction ID" value="UER00999"/>
</dbReference>
<dbReference type="Proteomes" id="UP000002524">
    <property type="component" value="Chromosome 1"/>
</dbReference>
<dbReference type="GO" id="GO:0005829">
    <property type="term" value="C:cytosol"/>
    <property type="evidence" value="ECO:0000318"/>
    <property type="project" value="GO_Central"/>
</dbReference>
<dbReference type="GO" id="GO:0042709">
    <property type="term" value="C:succinate-CoA ligase complex"/>
    <property type="evidence" value="ECO:0000318"/>
    <property type="project" value="GO_Central"/>
</dbReference>
<dbReference type="GO" id="GO:0005524">
    <property type="term" value="F:ATP binding"/>
    <property type="evidence" value="ECO:0007669"/>
    <property type="project" value="UniProtKB-UniRule"/>
</dbReference>
<dbReference type="GO" id="GO:0000287">
    <property type="term" value="F:magnesium ion binding"/>
    <property type="evidence" value="ECO:0007669"/>
    <property type="project" value="UniProtKB-UniRule"/>
</dbReference>
<dbReference type="GO" id="GO:0004775">
    <property type="term" value="F:succinate-CoA ligase (ADP-forming) activity"/>
    <property type="evidence" value="ECO:0000318"/>
    <property type="project" value="GO_Central"/>
</dbReference>
<dbReference type="GO" id="GO:0004776">
    <property type="term" value="F:succinate-CoA ligase (GDP-forming) activity"/>
    <property type="evidence" value="ECO:0007669"/>
    <property type="project" value="RHEA"/>
</dbReference>
<dbReference type="GO" id="GO:0006104">
    <property type="term" value="P:succinyl-CoA metabolic process"/>
    <property type="evidence" value="ECO:0000318"/>
    <property type="project" value="GO_Central"/>
</dbReference>
<dbReference type="GO" id="GO:0006099">
    <property type="term" value="P:tricarboxylic acid cycle"/>
    <property type="evidence" value="ECO:0000318"/>
    <property type="project" value="GO_Central"/>
</dbReference>
<dbReference type="FunFam" id="3.30.1490.20:FF:000014">
    <property type="entry name" value="Succinate--CoA ligase [ADP-forming] subunit beta"/>
    <property type="match status" value="1"/>
</dbReference>
<dbReference type="FunFam" id="3.30.470.20:FF:000002">
    <property type="entry name" value="Succinate--CoA ligase [ADP-forming] subunit beta"/>
    <property type="match status" value="1"/>
</dbReference>
<dbReference type="FunFam" id="3.40.50.261:FF:000024">
    <property type="entry name" value="Succinate--CoA ligase [ADP-forming] subunit beta"/>
    <property type="match status" value="1"/>
</dbReference>
<dbReference type="Gene3D" id="3.30.1490.20">
    <property type="entry name" value="ATP-grasp fold, A domain"/>
    <property type="match status" value="1"/>
</dbReference>
<dbReference type="Gene3D" id="3.30.470.20">
    <property type="entry name" value="ATP-grasp fold, B domain"/>
    <property type="match status" value="1"/>
</dbReference>
<dbReference type="Gene3D" id="3.40.50.261">
    <property type="entry name" value="Succinyl-CoA synthetase domains"/>
    <property type="match status" value="1"/>
</dbReference>
<dbReference type="HAMAP" id="MF_00558">
    <property type="entry name" value="Succ_CoA_beta"/>
    <property type="match status" value="1"/>
</dbReference>
<dbReference type="InterPro" id="IPR011761">
    <property type="entry name" value="ATP-grasp"/>
</dbReference>
<dbReference type="InterPro" id="IPR013650">
    <property type="entry name" value="ATP-grasp_succ-CoA_synth-type"/>
</dbReference>
<dbReference type="InterPro" id="IPR013815">
    <property type="entry name" value="ATP_grasp_subdomain_1"/>
</dbReference>
<dbReference type="InterPro" id="IPR017866">
    <property type="entry name" value="Succ-CoA_synthase_bsu_CS"/>
</dbReference>
<dbReference type="InterPro" id="IPR005811">
    <property type="entry name" value="SUCC_ACL_C"/>
</dbReference>
<dbReference type="InterPro" id="IPR005809">
    <property type="entry name" value="Succ_CoA_ligase-like_bsu"/>
</dbReference>
<dbReference type="InterPro" id="IPR016102">
    <property type="entry name" value="Succinyl-CoA_synth-like"/>
</dbReference>
<dbReference type="NCBIfam" id="NF001913">
    <property type="entry name" value="PRK00696.1"/>
    <property type="match status" value="1"/>
</dbReference>
<dbReference type="NCBIfam" id="TIGR01016">
    <property type="entry name" value="sucCoAbeta"/>
    <property type="match status" value="1"/>
</dbReference>
<dbReference type="PANTHER" id="PTHR11815:SF10">
    <property type="entry name" value="SUCCINATE--COA LIGASE [GDP-FORMING] SUBUNIT BETA, MITOCHONDRIAL"/>
    <property type="match status" value="1"/>
</dbReference>
<dbReference type="PANTHER" id="PTHR11815">
    <property type="entry name" value="SUCCINYL-COA SYNTHETASE BETA CHAIN"/>
    <property type="match status" value="1"/>
</dbReference>
<dbReference type="Pfam" id="PF08442">
    <property type="entry name" value="ATP-grasp_2"/>
    <property type="match status" value="1"/>
</dbReference>
<dbReference type="Pfam" id="PF00549">
    <property type="entry name" value="Ligase_CoA"/>
    <property type="match status" value="1"/>
</dbReference>
<dbReference type="PIRSF" id="PIRSF001554">
    <property type="entry name" value="SucCS_beta"/>
    <property type="match status" value="1"/>
</dbReference>
<dbReference type="SUPFAM" id="SSF56059">
    <property type="entry name" value="Glutathione synthetase ATP-binding domain-like"/>
    <property type="match status" value="1"/>
</dbReference>
<dbReference type="SUPFAM" id="SSF52210">
    <property type="entry name" value="Succinyl-CoA synthetase domains"/>
    <property type="match status" value="1"/>
</dbReference>
<dbReference type="PROSITE" id="PS50975">
    <property type="entry name" value="ATP_GRASP"/>
    <property type="match status" value="1"/>
</dbReference>
<dbReference type="PROSITE" id="PS01217">
    <property type="entry name" value="SUCCINYL_COA_LIG_3"/>
    <property type="match status" value="1"/>
</dbReference>
<organism>
    <name type="scientific">Deinococcus radiodurans (strain ATCC 13939 / DSM 20539 / JCM 16871 / CCUG 27074 / LMG 4051 / NBRC 15346 / NCIMB 9279 / VKM B-1422 / R1)</name>
    <dbReference type="NCBI Taxonomy" id="243230"/>
    <lineage>
        <taxon>Bacteria</taxon>
        <taxon>Thermotogati</taxon>
        <taxon>Deinococcota</taxon>
        <taxon>Deinococci</taxon>
        <taxon>Deinococcales</taxon>
        <taxon>Deinococcaceae</taxon>
        <taxon>Deinococcus</taxon>
    </lineage>
</organism>
<proteinExistence type="inferred from homology"/>
<protein>
    <recommendedName>
        <fullName evidence="1">Succinate--CoA ligase [ADP-forming] subunit beta</fullName>
        <ecNumber evidence="1">6.2.1.5</ecNumber>
    </recommendedName>
    <alternativeName>
        <fullName evidence="1">Succinyl-CoA synthetase subunit beta</fullName>
        <shortName evidence="1">SCS-beta</shortName>
    </alternativeName>
</protein>
<evidence type="ECO:0000255" key="1">
    <source>
        <dbReference type="HAMAP-Rule" id="MF_00558"/>
    </source>
</evidence>
<comment type="function">
    <text evidence="1">Succinyl-CoA synthetase functions in the citric acid cycle (TCA), coupling the hydrolysis of succinyl-CoA to the synthesis of either ATP or GTP and thus represents the only step of substrate-level phosphorylation in the TCA. The beta subunit provides nucleotide specificity of the enzyme and binds the substrate succinate, while the binding sites for coenzyme A and phosphate are found in the alpha subunit.</text>
</comment>
<comment type="catalytic activity">
    <reaction evidence="1">
        <text>succinate + ATP + CoA = succinyl-CoA + ADP + phosphate</text>
        <dbReference type="Rhea" id="RHEA:17661"/>
        <dbReference type="ChEBI" id="CHEBI:30031"/>
        <dbReference type="ChEBI" id="CHEBI:30616"/>
        <dbReference type="ChEBI" id="CHEBI:43474"/>
        <dbReference type="ChEBI" id="CHEBI:57287"/>
        <dbReference type="ChEBI" id="CHEBI:57292"/>
        <dbReference type="ChEBI" id="CHEBI:456216"/>
        <dbReference type="EC" id="6.2.1.5"/>
    </reaction>
    <physiologicalReaction direction="right-to-left" evidence="1">
        <dbReference type="Rhea" id="RHEA:17663"/>
    </physiologicalReaction>
</comment>
<comment type="catalytic activity">
    <reaction evidence="1">
        <text>GTP + succinate + CoA = succinyl-CoA + GDP + phosphate</text>
        <dbReference type="Rhea" id="RHEA:22120"/>
        <dbReference type="ChEBI" id="CHEBI:30031"/>
        <dbReference type="ChEBI" id="CHEBI:37565"/>
        <dbReference type="ChEBI" id="CHEBI:43474"/>
        <dbReference type="ChEBI" id="CHEBI:57287"/>
        <dbReference type="ChEBI" id="CHEBI:57292"/>
        <dbReference type="ChEBI" id="CHEBI:58189"/>
    </reaction>
    <physiologicalReaction direction="right-to-left" evidence="1">
        <dbReference type="Rhea" id="RHEA:22122"/>
    </physiologicalReaction>
</comment>
<comment type="cofactor">
    <cofactor evidence="1">
        <name>Mg(2+)</name>
        <dbReference type="ChEBI" id="CHEBI:18420"/>
    </cofactor>
    <text evidence="1">Binds 1 Mg(2+) ion per subunit.</text>
</comment>
<comment type="pathway">
    <text evidence="1">Carbohydrate metabolism; tricarboxylic acid cycle; succinate from succinyl-CoA (ligase route): step 1/1.</text>
</comment>
<comment type="subunit">
    <text evidence="1">Heterotetramer of two alpha and two beta subunits.</text>
</comment>
<comment type="similarity">
    <text evidence="1">Belongs to the succinate/malate CoA ligase beta subunit family.</text>
</comment>
<accession>Q9RUY3</accession>
<sequence>MKLHEYQGKEVLRDFGVNVQDGKVATTPEEVQAIYKEYGQPVVVKAQVHVGGRGKAGGVKYSANEDKALENAKNILGMDIKGLTVNKVLVTKAVDIDAGTEYYVGMIVDRNVQSYTLMASAEGGMEIEEVAATNPEKIIRHRVDPVTGLRPYEAREVAIKAGFRGNLNKIADMMVKMSKAALERDAVLVEINPLFVDADGTPIALDTKFEIDDNAMYRHKDLAHYRELSAEHPLEVEASDYGFAYVKLDDGNVGVLGNGAGIVMTTLDVVNRAGAKPANFLDIGGGAKADVVYNAVKLVSKDPDVKAIFINIFGGITRADEVAKGVIRALDEGILTKPVRMRIAGTAEDEAKALLNEKNSDLIKMYPTMFEAANEAAKEANALGGK</sequence>
<gene>
    <name evidence="1" type="primary">sucC</name>
    <name type="ordered locus">DR_1247</name>
</gene>
<feature type="chain" id="PRO_0000102831" description="Succinate--CoA ligase [ADP-forming] subunit beta">
    <location>
        <begin position="1"/>
        <end position="386"/>
    </location>
</feature>
<feature type="domain" description="ATP-grasp" evidence="1">
    <location>
        <begin position="9"/>
        <end position="237"/>
    </location>
</feature>
<feature type="binding site" evidence="1">
    <location>
        <position position="45"/>
    </location>
    <ligand>
        <name>ATP</name>
        <dbReference type="ChEBI" id="CHEBI:30616"/>
    </ligand>
</feature>
<feature type="binding site" evidence="1">
    <location>
        <begin position="52"/>
        <end position="54"/>
    </location>
    <ligand>
        <name>ATP</name>
        <dbReference type="ChEBI" id="CHEBI:30616"/>
    </ligand>
</feature>
<feature type="binding site" evidence="1">
    <location>
        <position position="94"/>
    </location>
    <ligand>
        <name>ATP</name>
        <dbReference type="ChEBI" id="CHEBI:30616"/>
    </ligand>
</feature>
<feature type="binding site" evidence="1">
    <location>
        <position position="101"/>
    </location>
    <ligand>
        <name>ATP</name>
        <dbReference type="ChEBI" id="CHEBI:30616"/>
    </ligand>
</feature>
<feature type="binding site" evidence="1">
    <location>
        <position position="192"/>
    </location>
    <ligand>
        <name>Mg(2+)</name>
        <dbReference type="ChEBI" id="CHEBI:18420"/>
    </ligand>
</feature>
<feature type="binding site" evidence="1">
    <location>
        <position position="206"/>
    </location>
    <ligand>
        <name>Mg(2+)</name>
        <dbReference type="ChEBI" id="CHEBI:18420"/>
    </ligand>
</feature>
<feature type="binding site" evidence="1">
    <location>
        <position position="258"/>
    </location>
    <ligand>
        <name>substrate</name>
        <note>ligand shared with subunit alpha</note>
    </ligand>
</feature>
<feature type="binding site" evidence="1">
    <location>
        <begin position="315"/>
        <end position="317"/>
    </location>
    <ligand>
        <name>substrate</name>
        <note>ligand shared with subunit alpha</note>
    </ligand>
</feature>
<keyword id="KW-0067">ATP-binding</keyword>
<keyword id="KW-0436">Ligase</keyword>
<keyword id="KW-0460">Magnesium</keyword>
<keyword id="KW-0479">Metal-binding</keyword>
<keyword id="KW-0547">Nucleotide-binding</keyword>
<keyword id="KW-1185">Reference proteome</keyword>
<keyword id="KW-0816">Tricarboxylic acid cycle</keyword>